<evidence type="ECO:0000255" key="1">
    <source>
        <dbReference type="HAMAP-Rule" id="MF_01345"/>
    </source>
</evidence>
<evidence type="ECO:0000305" key="2"/>
<gene>
    <name evidence="1" type="primary">rpsQ</name>
    <name type="ordered locus">SARI_04198</name>
</gene>
<organism>
    <name type="scientific">Salmonella arizonae (strain ATCC BAA-731 / CDC346-86 / RSK2980)</name>
    <dbReference type="NCBI Taxonomy" id="41514"/>
    <lineage>
        <taxon>Bacteria</taxon>
        <taxon>Pseudomonadati</taxon>
        <taxon>Pseudomonadota</taxon>
        <taxon>Gammaproteobacteria</taxon>
        <taxon>Enterobacterales</taxon>
        <taxon>Enterobacteriaceae</taxon>
        <taxon>Salmonella</taxon>
    </lineage>
</organism>
<name>RS17_SALAR</name>
<accession>A9MN57</accession>
<protein>
    <recommendedName>
        <fullName evidence="1">Small ribosomal subunit protein uS17</fullName>
    </recommendedName>
    <alternativeName>
        <fullName evidence="2">30S ribosomal protein S17</fullName>
    </alternativeName>
</protein>
<comment type="function">
    <text evidence="1">One of the primary rRNA binding proteins, it binds specifically to the 5'-end of 16S ribosomal RNA.</text>
</comment>
<comment type="subunit">
    <text evidence="1">Part of the 30S ribosomal subunit.</text>
</comment>
<comment type="similarity">
    <text evidence="1">Belongs to the universal ribosomal protein uS17 family.</text>
</comment>
<reference key="1">
    <citation type="submission" date="2007-11" db="EMBL/GenBank/DDBJ databases">
        <authorList>
            <consortium name="The Salmonella enterica serovar Arizonae Genome Sequencing Project"/>
            <person name="McClelland M."/>
            <person name="Sanderson E.K."/>
            <person name="Porwollik S."/>
            <person name="Spieth J."/>
            <person name="Clifton W.S."/>
            <person name="Fulton R."/>
            <person name="Chunyan W."/>
            <person name="Wollam A."/>
            <person name="Shah N."/>
            <person name="Pepin K."/>
            <person name="Bhonagiri V."/>
            <person name="Nash W."/>
            <person name="Johnson M."/>
            <person name="Thiruvilangam P."/>
            <person name="Wilson R."/>
        </authorList>
    </citation>
    <scope>NUCLEOTIDE SEQUENCE [LARGE SCALE GENOMIC DNA]</scope>
    <source>
        <strain>ATCC BAA-731 / CDC346-86 / RSK2980</strain>
    </source>
</reference>
<keyword id="KW-1185">Reference proteome</keyword>
<keyword id="KW-0687">Ribonucleoprotein</keyword>
<keyword id="KW-0689">Ribosomal protein</keyword>
<keyword id="KW-0694">RNA-binding</keyword>
<keyword id="KW-0699">rRNA-binding</keyword>
<proteinExistence type="inferred from homology"/>
<dbReference type="EMBL" id="CP000880">
    <property type="protein sequence ID" value="ABX23987.1"/>
    <property type="molecule type" value="Genomic_DNA"/>
</dbReference>
<dbReference type="SMR" id="A9MN57"/>
<dbReference type="STRING" id="41514.SARI_04198"/>
<dbReference type="KEGG" id="ses:SARI_04198"/>
<dbReference type="HOGENOM" id="CLU_073626_1_1_6"/>
<dbReference type="Proteomes" id="UP000002084">
    <property type="component" value="Chromosome"/>
</dbReference>
<dbReference type="GO" id="GO:0022627">
    <property type="term" value="C:cytosolic small ribosomal subunit"/>
    <property type="evidence" value="ECO:0007669"/>
    <property type="project" value="TreeGrafter"/>
</dbReference>
<dbReference type="GO" id="GO:0019843">
    <property type="term" value="F:rRNA binding"/>
    <property type="evidence" value="ECO:0007669"/>
    <property type="project" value="UniProtKB-UniRule"/>
</dbReference>
<dbReference type="GO" id="GO:0003735">
    <property type="term" value="F:structural constituent of ribosome"/>
    <property type="evidence" value="ECO:0007669"/>
    <property type="project" value="InterPro"/>
</dbReference>
<dbReference type="GO" id="GO:0006412">
    <property type="term" value="P:translation"/>
    <property type="evidence" value="ECO:0007669"/>
    <property type="project" value="UniProtKB-UniRule"/>
</dbReference>
<dbReference type="CDD" id="cd00364">
    <property type="entry name" value="Ribosomal_uS17"/>
    <property type="match status" value="1"/>
</dbReference>
<dbReference type="FunFam" id="2.40.50.140:FF:000014">
    <property type="entry name" value="30S ribosomal protein S17"/>
    <property type="match status" value="1"/>
</dbReference>
<dbReference type="Gene3D" id="2.40.50.140">
    <property type="entry name" value="Nucleic acid-binding proteins"/>
    <property type="match status" value="1"/>
</dbReference>
<dbReference type="HAMAP" id="MF_01345_B">
    <property type="entry name" value="Ribosomal_uS17_B"/>
    <property type="match status" value="1"/>
</dbReference>
<dbReference type="InterPro" id="IPR012340">
    <property type="entry name" value="NA-bd_OB-fold"/>
</dbReference>
<dbReference type="InterPro" id="IPR000266">
    <property type="entry name" value="Ribosomal_uS17"/>
</dbReference>
<dbReference type="InterPro" id="IPR019984">
    <property type="entry name" value="Ribosomal_uS17_bact/chlr"/>
</dbReference>
<dbReference type="InterPro" id="IPR019979">
    <property type="entry name" value="Ribosomal_uS17_CS"/>
</dbReference>
<dbReference type="NCBIfam" id="NF004123">
    <property type="entry name" value="PRK05610.1"/>
    <property type="match status" value="1"/>
</dbReference>
<dbReference type="NCBIfam" id="TIGR03635">
    <property type="entry name" value="uS17_bact"/>
    <property type="match status" value="1"/>
</dbReference>
<dbReference type="PANTHER" id="PTHR10744">
    <property type="entry name" value="40S RIBOSOMAL PROTEIN S11 FAMILY MEMBER"/>
    <property type="match status" value="1"/>
</dbReference>
<dbReference type="PANTHER" id="PTHR10744:SF1">
    <property type="entry name" value="SMALL RIBOSOMAL SUBUNIT PROTEIN US17M"/>
    <property type="match status" value="1"/>
</dbReference>
<dbReference type="Pfam" id="PF00366">
    <property type="entry name" value="Ribosomal_S17"/>
    <property type="match status" value="1"/>
</dbReference>
<dbReference type="PRINTS" id="PR00973">
    <property type="entry name" value="RIBOSOMALS17"/>
</dbReference>
<dbReference type="SUPFAM" id="SSF50249">
    <property type="entry name" value="Nucleic acid-binding proteins"/>
    <property type="match status" value="1"/>
</dbReference>
<dbReference type="PROSITE" id="PS00056">
    <property type="entry name" value="RIBOSOMAL_S17"/>
    <property type="match status" value="1"/>
</dbReference>
<feature type="chain" id="PRO_1000086853" description="Small ribosomal subunit protein uS17">
    <location>
        <begin position="1"/>
        <end position="84"/>
    </location>
</feature>
<sequence length="84" mass="9722">MTDKIRTLQGRVVSDKMEKSIVVAIERFVKHPIYGKFIKRTTKMHVHDENNECGIGDVVEIRECRPLSKTKSWTLVRVVEKAVL</sequence>